<gene>
    <name type="primary">sti1</name>
    <name type="ordered locus">SCO0762</name>
    <name type="ORF">SCF81.21c</name>
</gene>
<feature type="signal peptide" evidence="1">
    <location>
        <begin position="1"/>
        <end position="35"/>
    </location>
</feature>
<feature type="chain" id="PRO_0000033272" description="Subtilase-type protease inhibitor">
    <location>
        <begin position="36"/>
        <end position="144"/>
    </location>
</feature>
<feature type="site" description="Reactive bond" evidence="1">
    <location>
        <begin position="104"/>
        <end position="105"/>
    </location>
</feature>
<feature type="disulfide bond" evidence="1">
    <location>
        <begin position="66"/>
        <end position="81"/>
    </location>
</feature>
<feature type="disulfide bond" evidence="1">
    <location>
        <begin position="102"/>
        <end position="132"/>
    </location>
</feature>
<name>SSI_STRCO</name>
<dbReference type="EMBL" id="AL939106">
    <property type="protein sequence ID" value="CAB61542.1"/>
    <property type="molecule type" value="Genomic_DNA"/>
</dbReference>
<dbReference type="RefSeq" id="NP_625065.1">
    <property type="nucleotide sequence ID" value="NC_003888.3"/>
</dbReference>
<dbReference type="RefSeq" id="WP_003978099.1">
    <property type="nucleotide sequence ID" value="NZ_VNID01000004.1"/>
</dbReference>
<dbReference type="SMR" id="P61152"/>
<dbReference type="IntAct" id="P61152">
    <property type="interactions" value="2"/>
</dbReference>
<dbReference type="STRING" id="100226.gene:17758345"/>
<dbReference type="MEROPS" id="I16.008"/>
<dbReference type="PaxDb" id="100226-SCO0762"/>
<dbReference type="KEGG" id="sco:SCO0762"/>
<dbReference type="PATRIC" id="fig|100226.15.peg.753"/>
<dbReference type="eggNOG" id="ENOG50333FU">
    <property type="taxonomic scope" value="Bacteria"/>
</dbReference>
<dbReference type="HOGENOM" id="CLU_121949_0_0_11"/>
<dbReference type="InParanoid" id="P61152"/>
<dbReference type="OrthoDB" id="3542626at2"/>
<dbReference type="Proteomes" id="UP000001973">
    <property type="component" value="Chromosome"/>
</dbReference>
<dbReference type="GO" id="GO:0005576">
    <property type="term" value="C:extracellular region"/>
    <property type="evidence" value="ECO:0007669"/>
    <property type="project" value="UniProtKB-SubCell"/>
</dbReference>
<dbReference type="GO" id="GO:0004867">
    <property type="term" value="F:serine-type endopeptidase inhibitor activity"/>
    <property type="evidence" value="ECO:0007669"/>
    <property type="project" value="UniProtKB-UniRule"/>
</dbReference>
<dbReference type="Gene3D" id="3.30.350.10">
    <property type="entry name" value="Subtilisin inhibitor-like"/>
    <property type="match status" value="1"/>
</dbReference>
<dbReference type="HAMAP" id="MF_00778">
    <property type="entry name" value="SSI"/>
    <property type="match status" value="1"/>
</dbReference>
<dbReference type="InterPro" id="IPR000691">
    <property type="entry name" value="Prot_inh_I16_SSI"/>
</dbReference>
<dbReference type="InterPro" id="IPR020054">
    <property type="entry name" value="Prot_inh_SSI_I16_CS"/>
</dbReference>
<dbReference type="InterPro" id="IPR023549">
    <property type="entry name" value="Subtilisin_inhibitor"/>
</dbReference>
<dbReference type="InterPro" id="IPR036819">
    <property type="entry name" value="Subtilisin_inhibitor-like_sf"/>
</dbReference>
<dbReference type="NCBIfam" id="NF009715">
    <property type="entry name" value="PRK13244.1-1"/>
    <property type="match status" value="1"/>
</dbReference>
<dbReference type="Pfam" id="PF00720">
    <property type="entry name" value="SSI"/>
    <property type="match status" value="1"/>
</dbReference>
<dbReference type="PRINTS" id="PR00294">
    <property type="entry name" value="SSBTLNINHBTR"/>
</dbReference>
<dbReference type="SUPFAM" id="SSF55399">
    <property type="entry name" value="Subtilisin inhibitor"/>
    <property type="match status" value="1"/>
</dbReference>
<dbReference type="PROSITE" id="PS00999">
    <property type="entry name" value="SSI"/>
    <property type="match status" value="1"/>
</dbReference>
<organism>
    <name type="scientific">Streptomyces coelicolor (strain ATCC BAA-471 / A3(2) / M145)</name>
    <dbReference type="NCBI Taxonomy" id="100226"/>
    <lineage>
        <taxon>Bacteria</taxon>
        <taxon>Bacillati</taxon>
        <taxon>Actinomycetota</taxon>
        <taxon>Actinomycetes</taxon>
        <taxon>Kitasatosporales</taxon>
        <taxon>Streptomycetaceae</taxon>
        <taxon>Streptomyces</taxon>
        <taxon>Streptomyces albidoflavus group</taxon>
    </lineage>
</organism>
<evidence type="ECO:0000250" key="1"/>
<evidence type="ECO:0000305" key="2"/>
<sequence>MRNTARWAATLGLTATAVCGPLAGASLASPATAPASLYAPSALVLTVGHGESAATAAPLRAVTLTCAPTASGTHPAAAAACAELRAAHGDPSALAAEDSVMCTREYAPVVVTVDGVWQGRRLSYERTFANECVKNAGSASVFTF</sequence>
<keyword id="KW-1015">Disulfide bond</keyword>
<keyword id="KW-0646">Protease inhibitor</keyword>
<keyword id="KW-1185">Reference proteome</keyword>
<keyword id="KW-0964">Secreted</keyword>
<keyword id="KW-0722">Serine protease inhibitor</keyword>
<keyword id="KW-0732">Signal</keyword>
<protein>
    <recommendedName>
        <fullName>Subtilase-type protease inhibitor</fullName>
    </recommendedName>
</protein>
<proteinExistence type="evidence at protein level"/>
<reference key="1">
    <citation type="journal article" date="2002" name="Nature">
        <title>Complete genome sequence of the model actinomycete Streptomyces coelicolor A3(2).</title>
        <authorList>
            <person name="Bentley S.D."/>
            <person name="Chater K.F."/>
            <person name="Cerdeno-Tarraga A.-M."/>
            <person name="Challis G.L."/>
            <person name="Thomson N.R."/>
            <person name="James K.D."/>
            <person name="Harris D.E."/>
            <person name="Quail M.A."/>
            <person name="Kieser H."/>
            <person name="Harper D."/>
            <person name="Bateman A."/>
            <person name="Brown S."/>
            <person name="Chandra G."/>
            <person name="Chen C.W."/>
            <person name="Collins M."/>
            <person name="Cronin A."/>
            <person name="Fraser A."/>
            <person name="Goble A."/>
            <person name="Hidalgo J."/>
            <person name="Hornsby T."/>
            <person name="Howarth S."/>
            <person name="Huang C.-H."/>
            <person name="Kieser T."/>
            <person name="Larke L."/>
            <person name="Murphy L.D."/>
            <person name="Oliver K."/>
            <person name="O'Neil S."/>
            <person name="Rabbinowitsch E."/>
            <person name="Rajandream M.A."/>
            <person name="Rutherford K.M."/>
            <person name="Rutter S."/>
            <person name="Seeger K."/>
            <person name="Saunders D."/>
            <person name="Sharp S."/>
            <person name="Squares R."/>
            <person name="Squares S."/>
            <person name="Taylor K."/>
            <person name="Warren T."/>
            <person name="Wietzorrek A."/>
            <person name="Woodward J.R."/>
            <person name="Barrell B.G."/>
            <person name="Parkhill J."/>
            <person name="Hopwood D.A."/>
        </authorList>
    </citation>
    <scope>NUCLEOTIDE SEQUENCE [LARGE SCALE GENOMIC DNA]</scope>
    <source>
        <strain>ATCC BAA-471 / A3(2) / M145</strain>
    </source>
</reference>
<reference key="2">
    <citation type="journal article" date="1996" name="FEMS Microbiol. Lett.">
        <title>Taxonomic characterization of closely related Streptomyces spp. based on the amino acid sequence analysis of protease inhibitor proteins.</title>
        <authorList>
            <person name="Taguchi S."/>
            <person name="Kojima S."/>
            <person name="Miura K."/>
            <person name="Momose H."/>
        </authorList>
    </citation>
    <scope>NUCLEOTIDE SEQUENCE [GENOMIC DNA] OF 38-144</scope>
    <source>
        <strain>A3(2) / NRRL B-16638</strain>
    </source>
</reference>
<accession>P61152</accession>
<accession>P28591</accession>
<accession>Q9R644</accession>
<comment type="function">
    <text>Strong inhibitory activity toward subtilisin BPN' and, to a lesser extent, toward trypsin.</text>
</comment>
<comment type="subunit">
    <text evidence="1">Homodimer.</text>
</comment>
<comment type="interaction">
    <interactant intactId="EBI-6404783">
        <id>P61152</id>
    </interactant>
    <interactant intactId="EBI-6404777">
        <id>Q9K3X9</id>
        <label>SCO1355</label>
    </interactant>
    <organismsDiffer>false</organismsDiffer>
    <experiments>5</experiments>
</comment>
<comment type="subcellular location">
    <subcellularLocation>
        <location evidence="1">Secreted</location>
    </subcellularLocation>
</comment>
<comment type="similarity">
    <text evidence="2">Belongs to the protease inhibitor I16 (SSI) family.</text>
</comment>